<proteinExistence type="evidence at protein level"/>
<accession>Q6PBI5</accession>
<keyword id="KW-0002">3D-structure</keyword>
<keyword id="KW-0963">Cytoplasm</keyword>
<keyword id="KW-1185">Reference proteome</keyword>
<keyword id="KW-0687">Ribonucleoprotein</keyword>
<keyword id="KW-0689">Ribosomal protein</keyword>
<dbReference type="EMBL" id="BC059695">
    <property type="protein sequence ID" value="AAH59695.1"/>
    <property type="molecule type" value="mRNA"/>
</dbReference>
<dbReference type="RefSeq" id="NP_957109.1">
    <property type="nucleotide sequence ID" value="NM_200815.1"/>
</dbReference>
<dbReference type="PDB" id="7OYA">
    <property type="method" value="EM"/>
    <property type="resolution" value="3.20 A"/>
    <property type="chains" value="Z2=1-124"/>
</dbReference>
<dbReference type="PDB" id="7OYB">
    <property type="method" value="EM"/>
    <property type="resolution" value="2.40 A"/>
    <property type="chains" value="Z2=1-124"/>
</dbReference>
<dbReference type="PDBsum" id="7OYA"/>
<dbReference type="PDBsum" id="7OYB"/>
<dbReference type="EMDB" id="EMD-13111"/>
<dbReference type="EMDB" id="EMD-13112"/>
<dbReference type="SMR" id="Q6PBI5"/>
<dbReference type="FunCoup" id="Q6PBI5">
    <property type="interactions" value="2390"/>
</dbReference>
<dbReference type="STRING" id="7955.ENSDARP00000124711"/>
<dbReference type="PaxDb" id="7955-ENSDARP00000061273"/>
<dbReference type="Ensembl" id="ENSDART00000148648">
    <property type="protein sequence ID" value="ENSDARP00000124711"/>
    <property type="gene ID" value="ENSDARG00000041811"/>
</dbReference>
<dbReference type="GeneID" id="393788"/>
<dbReference type="KEGG" id="dre:393788"/>
<dbReference type="AGR" id="ZFIN:ZDB-GENE-040426-1788"/>
<dbReference type="CTD" id="6230"/>
<dbReference type="ZFIN" id="ZDB-GENE-040426-1788">
    <property type="gene designation" value="rps25"/>
</dbReference>
<dbReference type="eggNOG" id="KOG1767">
    <property type="taxonomic scope" value="Eukaryota"/>
</dbReference>
<dbReference type="HOGENOM" id="CLU_129470_0_1_1"/>
<dbReference type="InParanoid" id="Q6PBI5"/>
<dbReference type="OrthoDB" id="10263513at2759"/>
<dbReference type="PhylomeDB" id="Q6PBI5"/>
<dbReference type="TreeFam" id="TF314909"/>
<dbReference type="Reactome" id="R-DRE-156827">
    <property type="pathway name" value="L13a-mediated translational silencing of Ceruloplasmin expression"/>
</dbReference>
<dbReference type="Reactome" id="R-DRE-1799339">
    <property type="pathway name" value="SRP-dependent cotranslational protein targeting to membrane"/>
</dbReference>
<dbReference type="Reactome" id="R-DRE-72689">
    <property type="pathway name" value="Formation of a pool of free 40S subunits"/>
</dbReference>
<dbReference type="Reactome" id="R-DRE-72695">
    <property type="pathway name" value="Formation of the ternary complex, and subsequently, the 43S complex"/>
</dbReference>
<dbReference type="Reactome" id="R-DRE-72702">
    <property type="pathway name" value="Ribosomal scanning and start codon recognition"/>
</dbReference>
<dbReference type="Reactome" id="R-DRE-975956">
    <property type="pathway name" value="Nonsense Mediated Decay (NMD) independent of the Exon Junction Complex (EJC)"/>
</dbReference>
<dbReference type="Reactome" id="R-DRE-975957">
    <property type="pathway name" value="Nonsense Mediated Decay (NMD) enhanced by the Exon Junction Complex (EJC)"/>
</dbReference>
<dbReference type="PRO" id="PR:Q6PBI5"/>
<dbReference type="Proteomes" id="UP000000437">
    <property type="component" value="Chromosome 10"/>
</dbReference>
<dbReference type="Bgee" id="ENSDARG00000041811">
    <property type="expression patterns" value="Expressed in tail bud paraxial mesoderm and 27 other cell types or tissues"/>
</dbReference>
<dbReference type="ExpressionAtlas" id="Q6PBI5">
    <property type="expression patterns" value="baseline and differential"/>
</dbReference>
<dbReference type="GO" id="GO:0022627">
    <property type="term" value="C:cytosolic small ribosomal subunit"/>
    <property type="evidence" value="ECO:0000318"/>
    <property type="project" value="GO_Central"/>
</dbReference>
<dbReference type="GO" id="GO:0003735">
    <property type="term" value="F:structural constituent of ribosome"/>
    <property type="evidence" value="ECO:0000318"/>
    <property type="project" value="GO_Central"/>
</dbReference>
<dbReference type="FunFam" id="1.10.10.10:FF:000166">
    <property type="entry name" value="40S ribosomal protein S25"/>
    <property type="match status" value="1"/>
</dbReference>
<dbReference type="FunFam" id="3.30.63.20:FF:000001">
    <property type="entry name" value="40S ribosomal protein S25"/>
    <property type="match status" value="1"/>
</dbReference>
<dbReference type="Gene3D" id="3.30.63.20">
    <property type="match status" value="1"/>
</dbReference>
<dbReference type="InterPro" id="IPR004977">
    <property type="entry name" value="Ribosomal_eS25"/>
</dbReference>
<dbReference type="PANTHER" id="PTHR12850">
    <property type="entry name" value="40S RIBOSOMAL PROTEIN S25"/>
    <property type="match status" value="1"/>
</dbReference>
<dbReference type="Pfam" id="PF03297">
    <property type="entry name" value="Ribosomal_S25"/>
    <property type="match status" value="1"/>
</dbReference>
<comment type="function">
    <text evidence="1">Component of the small ribosomal subunit. The ribosome is a large ribonucleoprotein complex responsible for the synthesis of proteins in the cell.</text>
</comment>
<comment type="subunit">
    <text evidence="1">Component of the small ribosomal subunit.</text>
</comment>
<comment type="subcellular location">
    <subcellularLocation>
        <location evidence="1">Cytoplasm</location>
    </subcellularLocation>
</comment>
<comment type="similarity">
    <text evidence="3">Belongs to the eukaryotic ribosomal protein eS25 family.</text>
</comment>
<feature type="chain" id="PRO_0000192873" description="Small ribosomal subunit protein eS25">
    <location>
        <begin position="1"/>
        <end position="124"/>
    </location>
</feature>
<feature type="region of interest" description="Disordered" evidence="2">
    <location>
        <begin position="1"/>
        <end position="37"/>
    </location>
</feature>
<feature type="compositionally biased region" description="Basic and acidic residues" evidence="2">
    <location>
        <begin position="1"/>
        <end position="22"/>
    </location>
</feature>
<feature type="compositionally biased region" description="Basic residues" evidence="2">
    <location>
        <begin position="27"/>
        <end position="37"/>
    </location>
</feature>
<sequence>MPPKDSKQKKDAGKSKKDKDPVNKSGGKAKKKKWSKGKVRDKLNNLVLFDKATYDKLYKEVPNYKLITPAVVSERLKIRGSLARAALQELLGKGLIKLVSKHRAQVIYTRNTKGTDEAAPEKEA</sequence>
<name>RS25_DANRE</name>
<reference key="1">
    <citation type="submission" date="2003-10" db="EMBL/GenBank/DDBJ databases">
        <authorList>
            <consortium name="NIH - Zebrafish Gene Collection (ZGC) project"/>
        </authorList>
    </citation>
    <scope>NUCLEOTIDE SEQUENCE [LARGE SCALE MRNA]</scope>
    <source>
        <tissue>Eye</tissue>
    </source>
</reference>
<evidence type="ECO:0000250" key="1">
    <source>
        <dbReference type="UniProtKB" id="P62851"/>
    </source>
</evidence>
<evidence type="ECO:0000256" key="2">
    <source>
        <dbReference type="SAM" id="MobiDB-lite"/>
    </source>
</evidence>
<evidence type="ECO:0000305" key="3"/>
<protein>
    <recommendedName>
        <fullName evidence="3">Small ribosomal subunit protein eS25</fullName>
    </recommendedName>
    <alternativeName>
        <fullName>40S ribosomal protein S25</fullName>
    </alternativeName>
</protein>
<gene>
    <name type="primary">rps25</name>
    <name type="ORF">zgc:73391</name>
</gene>
<organism>
    <name type="scientific">Danio rerio</name>
    <name type="common">Zebrafish</name>
    <name type="synonym">Brachydanio rerio</name>
    <dbReference type="NCBI Taxonomy" id="7955"/>
    <lineage>
        <taxon>Eukaryota</taxon>
        <taxon>Metazoa</taxon>
        <taxon>Chordata</taxon>
        <taxon>Craniata</taxon>
        <taxon>Vertebrata</taxon>
        <taxon>Euteleostomi</taxon>
        <taxon>Actinopterygii</taxon>
        <taxon>Neopterygii</taxon>
        <taxon>Teleostei</taxon>
        <taxon>Ostariophysi</taxon>
        <taxon>Cypriniformes</taxon>
        <taxon>Danionidae</taxon>
        <taxon>Danioninae</taxon>
        <taxon>Danio</taxon>
    </lineage>
</organism>